<name>CSPD_SHIFL</name>
<sequence>MEKGTVKWFNNAKGFGFICPEGGGEDIFAHYSTIQMDGYRTLKAGQSVQFDVHQGPKGNHASVIVPVEVEAAVA</sequence>
<reference key="1">
    <citation type="journal article" date="2002" name="Nucleic Acids Res.">
        <title>Genome sequence of Shigella flexneri 2a: insights into pathogenicity through comparison with genomes of Escherichia coli K12 and O157.</title>
        <authorList>
            <person name="Jin Q."/>
            <person name="Yuan Z."/>
            <person name="Xu J."/>
            <person name="Wang Y."/>
            <person name="Shen Y."/>
            <person name="Lu W."/>
            <person name="Wang J."/>
            <person name="Liu H."/>
            <person name="Yang J."/>
            <person name="Yang F."/>
            <person name="Zhang X."/>
            <person name="Zhang J."/>
            <person name="Yang G."/>
            <person name="Wu H."/>
            <person name="Qu D."/>
            <person name="Dong J."/>
            <person name="Sun L."/>
            <person name="Xue Y."/>
            <person name="Zhao A."/>
            <person name="Gao Y."/>
            <person name="Zhu J."/>
            <person name="Kan B."/>
            <person name="Ding K."/>
            <person name="Chen S."/>
            <person name="Cheng H."/>
            <person name="Yao Z."/>
            <person name="He B."/>
            <person name="Chen R."/>
            <person name="Ma D."/>
            <person name="Qiang B."/>
            <person name="Wen Y."/>
            <person name="Hou Y."/>
            <person name="Yu J."/>
        </authorList>
    </citation>
    <scope>NUCLEOTIDE SEQUENCE [LARGE SCALE GENOMIC DNA]</scope>
    <source>
        <strain>301 / Serotype 2a</strain>
    </source>
</reference>
<reference key="2">
    <citation type="journal article" date="2003" name="Infect. Immun.">
        <title>Complete genome sequence and comparative genomics of Shigella flexneri serotype 2a strain 2457T.</title>
        <authorList>
            <person name="Wei J."/>
            <person name="Goldberg M.B."/>
            <person name="Burland V."/>
            <person name="Venkatesan M.M."/>
            <person name="Deng W."/>
            <person name="Fournier G."/>
            <person name="Mayhew G.F."/>
            <person name="Plunkett G. III"/>
            <person name="Rose D.J."/>
            <person name="Darling A."/>
            <person name="Mau B."/>
            <person name="Perna N.T."/>
            <person name="Payne S.M."/>
            <person name="Runyen-Janecky L.J."/>
            <person name="Zhou S."/>
            <person name="Schwartz D.C."/>
            <person name="Blattner F.R."/>
        </authorList>
    </citation>
    <scope>NUCLEOTIDE SEQUENCE [LARGE SCALE GENOMIC DNA]</scope>
    <source>
        <strain>ATCC 700930 / 2457T / Serotype 2a</strain>
    </source>
</reference>
<accession>P0A971</accession>
<accession>P24245</accession>
<organism>
    <name type="scientific">Shigella flexneri</name>
    <dbReference type="NCBI Taxonomy" id="623"/>
    <lineage>
        <taxon>Bacteria</taxon>
        <taxon>Pseudomonadati</taxon>
        <taxon>Pseudomonadota</taxon>
        <taxon>Gammaproteobacteria</taxon>
        <taxon>Enterobacterales</taxon>
        <taxon>Enterobacteriaceae</taxon>
        <taxon>Shigella</taxon>
    </lineage>
</organism>
<dbReference type="EMBL" id="AE005674">
    <property type="protein sequence ID" value="AAN42473.1"/>
    <property type="molecule type" value="Genomic_DNA"/>
</dbReference>
<dbReference type="EMBL" id="AE014073">
    <property type="protein sequence ID" value="AAP16345.1"/>
    <property type="molecule type" value="Genomic_DNA"/>
</dbReference>
<dbReference type="RefSeq" id="NP_706766.1">
    <property type="nucleotide sequence ID" value="NC_004337.2"/>
</dbReference>
<dbReference type="RefSeq" id="WP_000410785.1">
    <property type="nucleotide sequence ID" value="NZ_WPGW01000037.1"/>
</dbReference>
<dbReference type="SMR" id="P0A971"/>
<dbReference type="STRING" id="198214.SF0840"/>
<dbReference type="PaxDb" id="198214-SF0840"/>
<dbReference type="GeneID" id="1027556"/>
<dbReference type="GeneID" id="93776540"/>
<dbReference type="KEGG" id="sfl:SF0840"/>
<dbReference type="KEGG" id="sfx:S0880"/>
<dbReference type="PATRIC" id="fig|198214.7.peg.969"/>
<dbReference type="HOGENOM" id="CLU_117621_0_2_6"/>
<dbReference type="Proteomes" id="UP000001006">
    <property type="component" value="Chromosome"/>
</dbReference>
<dbReference type="Proteomes" id="UP000002673">
    <property type="component" value="Chromosome"/>
</dbReference>
<dbReference type="GO" id="GO:0005829">
    <property type="term" value="C:cytosol"/>
    <property type="evidence" value="ECO:0007669"/>
    <property type="project" value="UniProtKB-ARBA"/>
</dbReference>
<dbReference type="GO" id="GO:0003677">
    <property type="term" value="F:DNA binding"/>
    <property type="evidence" value="ECO:0007669"/>
    <property type="project" value="UniProtKB-KW"/>
</dbReference>
<dbReference type="GO" id="GO:0003723">
    <property type="term" value="F:RNA binding"/>
    <property type="evidence" value="ECO:0007669"/>
    <property type="project" value="UniProtKB-KW"/>
</dbReference>
<dbReference type="GO" id="GO:0008156">
    <property type="term" value="P:negative regulation of DNA replication"/>
    <property type="evidence" value="ECO:0007669"/>
    <property type="project" value="UniProtKB-KW"/>
</dbReference>
<dbReference type="GO" id="GO:0006355">
    <property type="term" value="P:regulation of DNA-templated transcription"/>
    <property type="evidence" value="ECO:0007669"/>
    <property type="project" value="InterPro"/>
</dbReference>
<dbReference type="CDD" id="cd04458">
    <property type="entry name" value="CSP_CDS"/>
    <property type="match status" value="1"/>
</dbReference>
<dbReference type="FunFam" id="2.40.50.140:FF:000006">
    <property type="entry name" value="Cold shock protein CspC"/>
    <property type="match status" value="1"/>
</dbReference>
<dbReference type="Gene3D" id="2.40.50.140">
    <property type="entry name" value="Nucleic acid-binding proteins"/>
    <property type="match status" value="1"/>
</dbReference>
<dbReference type="InterPro" id="IPR012156">
    <property type="entry name" value="Cold_shock_CspA"/>
</dbReference>
<dbReference type="InterPro" id="IPR050181">
    <property type="entry name" value="Cold_shock_domain"/>
</dbReference>
<dbReference type="InterPro" id="IPR011129">
    <property type="entry name" value="CSD"/>
</dbReference>
<dbReference type="InterPro" id="IPR019844">
    <property type="entry name" value="CSD_CS"/>
</dbReference>
<dbReference type="InterPro" id="IPR002059">
    <property type="entry name" value="CSP_DNA-bd"/>
</dbReference>
<dbReference type="InterPro" id="IPR012751">
    <property type="entry name" value="CspD"/>
</dbReference>
<dbReference type="InterPro" id="IPR012340">
    <property type="entry name" value="NA-bd_OB-fold"/>
</dbReference>
<dbReference type="NCBIfam" id="TIGR02381">
    <property type="entry name" value="cspD"/>
    <property type="match status" value="1"/>
</dbReference>
<dbReference type="NCBIfam" id="NF007405">
    <property type="entry name" value="PRK09937.1"/>
    <property type="match status" value="1"/>
</dbReference>
<dbReference type="NCBIfam" id="NF011574">
    <property type="entry name" value="PRK14998.1"/>
    <property type="match status" value="1"/>
</dbReference>
<dbReference type="PANTHER" id="PTHR11544">
    <property type="entry name" value="COLD SHOCK DOMAIN CONTAINING PROTEINS"/>
    <property type="match status" value="1"/>
</dbReference>
<dbReference type="Pfam" id="PF00313">
    <property type="entry name" value="CSD"/>
    <property type="match status" value="1"/>
</dbReference>
<dbReference type="PIRSF" id="PIRSF002599">
    <property type="entry name" value="Cold_shock_A"/>
    <property type="match status" value="1"/>
</dbReference>
<dbReference type="PRINTS" id="PR00050">
    <property type="entry name" value="COLDSHOCK"/>
</dbReference>
<dbReference type="SMART" id="SM00357">
    <property type="entry name" value="CSP"/>
    <property type="match status" value="1"/>
</dbReference>
<dbReference type="SUPFAM" id="SSF50249">
    <property type="entry name" value="Nucleic acid-binding proteins"/>
    <property type="match status" value="1"/>
</dbReference>
<dbReference type="PROSITE" id="PS00352">
    <property type="entry name" value="CSD_1"/>
    <property type="match status" value="1"/>
</dbReference>
<dbReference type="PROSITE" id="PS51857">
    <property type="entry name" value="CSD_2"/>
    <property type="match status" value="1"/>
</dbReference>
<comment type="function">
    <text evidence="1">Inhibits DNA replication at both initiation and elongation steps, most probably by binding to the opened, single-stranded regions at replication forks. Plays a regulatory role in chromosomal replication in nutrient-depleted cells (By similarity).</text>
</comment>
<comment type="subunit">
    <text evidence="1">Homodimer.</text>
</comment>
<comment type="subcellular location">
    <subcellularLocation>
        <location evidence="1">Cytoplasm</location>
    </subcellularLocation>
</comment>
<comment type="miscellaneous">
    <text evidence="1">Binds single-stranded DNA and RNA, but not double-stranded DNA, through hydrophobic interaction without sequence specificity, resulting in a packed structure.</text>
</comment>
<proteinExistence type="inferred from homology"/>
<protein>
    <recommendedName>
        <fullName>Cold shock-like protein CspD</fullName>
        <shortName>CSP-D</shortName>
    </recommendedName>
</protein>
<gene>
    <name type="primary">cspD</name>
    <name type="ordered locus">SF0840</name>
    <name type="ordered locus">S0880</name>
</gene>
<feature type="chain" id="PRO_0000100251" description="Cold shock-like protein CspD">
    <location>
        <begin position="1"/>
        <end position="74"/>
    </location>
</feature>
<feature type="domain" description="CSD">
    <location>
        <begin position="4"/>
        <end position="64"/>
    </location>
</feature>
<keyword id="KW-0963">Cytoplasm</keyword>
<keyword id="KW-0236">DNA replication inhibitor</keyword>
<keyword id="KW-0238">DNA-binding</keyword>
<keyword id="KW-1185">Reference proteome</keyword>
<keyword id="KW-0694">RNA-binding</keyword>
<evidence type="ECO:0000250" key="1"/>